<feature type="chain" id="PRO_0000147319" description="GTP cyclohydrolase 1 type 2 homolog">
    <location>
        <begin position="1"/>
        <end position="379"/>
    </location>
</feature>
<feature type="binding site" evidence="1">
    <location>
        <position position="64"/>
    </location>
    <ligand>
        <name>a divalent metal cation</name>
        <dbReference type="ChEBI" id="CHEBI:60240"/>
        <label>1</label>
    </ligand>
</feature>
<feature type="binding site" evidence="1">
    <location>
        <position position="65"/>
    </location>
    <ligand>
        <name>a divalent metal cation</name>
        <dbReference type="ChEBI" id="CHEBI:60240"/>
        <label>2</label>
    </ligand>
</feature>
<feature type="binding site" evidence="1">
    <location>
        <position position="103"/>
    </location>
    <ligand>
        <name>a divalent metal cation</name>
        <dbReference type="ChEBI" id="CHEBI:60240"/>
        <label>1</label>
    </ligand>
</feature>
<feature type="binding site" evidence="1">
    <location>
        <position position="333"/>
    </location>
    <ligand>
        <name>a divalent metal cation</name>
        <dbReference type="ChEBI" id="CHEBI:60240"/>
        <label>2</label>
    </ligand>
</feature>
<feature type="binding site" evidence="1">
    <location>
        <position position="337"/>
    </location>
    <ligand>
        <name>a divalent metal cation</name>
        <dbReference type="ChEBI" id="CHEBI:60240"/>
        <label>1</label>
    </ligand>
</feature>
<feature type="binding site" evidence="1">
    <location>
        <position position="337"/>
    </location>
    <ligand>
        <name>a divalent metal cation</name>
        <dbReference type="ChEBI" id="CHEBI:60240"/>
        <label>2</label>
    </ligand>
</feature>
<evidence type="ECO:0000250" key="1">
    <source>
        <dbReference type="UniProtKB" id="P0AFP6"/>
    </source>
</evidence>
<evidence type="ECO:0000305" key="2"/>
<reference key="1">
    <citation type="journal article" date="2003" name="Proc. Natl. Acad. Sci. U.S.A.">
        <title>The complete genome sequence of Mycobacterium bovis.</title>
        <authorList>
            <person name="Garnier T."/>
            <person name="Eiglmeier K."/>
            <person name="Camus J.-C."/>
            <person name="Medina N."/>
            <person name="Mansoor H."/>
            <person name="Pryor M."/>
            <person name="Duthoy S."/>
            <person name="Grondin S."/>
            <person name="Lacroix C."/>
            <person name="Monsempe C."/>
            <person name="Simon S."/>
            <person name="Harris B."/>
            <person name="Atkin R."/>
            <person name="Doggett J."/>
            <person name="Mayes R."/>
            <person name="Keating L."/>
            <person name="Wheeler P.R."/>
            <person name="Parkhill J."/>
            <person name="Barrell B.G."/>
            <person name="Cole S.T."/>
            <person name="Gordon S.V."/>
            <person name="Hewinson R.G."/>
        </authorList>
    </citation>
    <scope>NUCLEOTIDE SEQUENCE [LARGE SCALE GENOMIC DNA]</scope>
    <source>
        <strain>ATCC BAA-935 / AF2122/97</strain>
    </source>
</reference>
<reference key="2">
    <citation type="journal article" date="2017" name="Genome Announc.">
        <title>Updated reference genome sequence and annotation of Mycobacterium bovis AF2122/97.</title>
        <authorList>
            <person name="Malone K.M."/>
            <person name="Farrell D."/>
            <person name="Stuber T.P."/>
            <person name="Schubert O.T."/>
            <person name="Aebersold R."/>
            <person name="Robbe-Austerman S."/>
            <person name="Gordon S.V."/>
        </authorList>
    </citation>
    <scope>NUCLEOTIDE SEQUENCE [LARGE SCALE GENOMIC DNA]</scope>
    <scope>GENOME REANNOTATION</scope>
    <source>
        <strain>ATCC BAA-935 / AF2122/97</strain>
    </source>
</reference>
<dbReference type="EMBL" id="LT708304">
    <property type="protein sequence ID" value="SIU00863.1"/>
    <property type="molecule type" value="Genomic_DNA"/>
</dbReference>
<dbReference type="RefSeq" id="NP_855904.1">
    <property type="nucleotide sequence ID" value="NC_002945.3"/>
</dbReference>
<dbReference type="RefSeq" id="WP_003411502.1">
    <property type="nucleotide sequence ID" value="NC_002945.4"/>
</dbReference>
<dbReference type="SMR" id="P0A657"/>
<dbReference type="KEGG" id="mbo:BQ2027_MB2255C"/>
<dbReference type="PATRIC" id="fig|233413.5.peg.2472"/>
<dbReference type="Proteomes" id="UP000001419">
    <property type="component" value="Chromosome"/>
</dbReference>
<dbReference type="GO" id="GO:0005737">
    <property type="term" value="C:cytoplasm"/>
    <property type="evidence" value="ECO:0007669"/>
    <property type="project" value="TreeGrafter"/>
</dbReference>
<dbReference type="GO" id="GO:0046872">
    <property type="term" value="F:metal ion binding"/>
    <property type="evidence" value="ECO:0007669"/>
    <property type="project" value="UniProtKB-KW"/>
</dbReference>
<dbReference type="FunFam" id="3.40.1390.30:FF:000001">
    <property type="entry name" value="GTP cyclohydrolase 1 type 2"/>
    <property type="match status" value="1"/>
</dbReference>
<dbReference type="FunFam" id="3.30.70.120:FF:000006">
    <property type="entry name" value="GTP cyclohydrolase 1 type 2 homolog"/>
    <property type="match status" value="1"/>
</dbReference>
<dbReference type="Gene3D" id="3.30.70.120">
    <property type="match status" value="1"/>
</dbReference>
<dbReference type="Gene3D" id="3.40.1390.30">
    <property type="entry name" value="NIF3 (NGG1p interacting factor 3)-like"/>
    <property type="match status" value="1"/>
</dbReference>
<dbReference type="InterPro" id="IPR002678">
    <property type="entry name" value="DUF34/NIF3"/>
</dbReference>
<dbReference type="InterPro" id="IPR017221">
    <property type="entry name" value="DUF34/NIF3_bac"/>
</dbReference>
<dbReference type="InterPro" id="IPR036069">
    <property type="entry name" value="DUF34/NIF3_sf"/>
</dbReference>
<dbReference type="InterPro" id="IPR015867">
    <property type="entry name" value="N-reg_PII/ATP_PRibTrfase_C"/>
</dbReference>
<dbReference type="NCBIfam" id="TIGR00486">
    <property type="entry name" value="YbgI_SA1388"/>
    <property type="match status" value="1"/>
</dbReference>
<dbReference type="PANTHER" id="PTHR13799:SF14">
    <property type="entry name" value="GTP CYCLOHYDROLASE 1 TYPE 2 HOMOLOG"/>
    <property type="match status" value="1"/>
</dbReference>
<dbReference type="PANTHER" id="PTHR13799">
    <property type="entry name" value="NGG1 INTERACTING FACTOR 3"/>
    <property type="match status" value="1"/>
</dbReference>
<dbReference type="Pfam" id="PF01784">
    <property type="entry name" value="DUF34_NIF3"/>
    <property type="match status" value="1"/>
</dbReference>
<dbReference type="PIRSF" id="PIRSF037489">
    <property type="entry name" value="UCP037489_NIF3_YqfO"/>
    <property type="match status" value="1"/>
</dbReference>
<dbReference type="SUPFAM" id="SSF102705">
    <property type="entry name" value="NIF3 (NGG1p interacting factor 3)-like"/>
    <property type="match status" value="1"/>
</dbReference>
<accession>P0A657</accession>
<accession>A0A1R3Y0K4</accession>
<accession>Q10514</accession>
<accession>X2BK75</accession>
<comment type="subunit">
    <text evidence="1">Homohexamer.</text>
</comment>
<comment type="similarity">
    <text evidence="2">Belongs to the GTP cyclohydrolase I type 2/NIF3 family.</text>
</comment>
<keyword id="KW-0479">Metal-binding</keyword>
<keyword id="KW-1185">Reference proteome</keyword>
<gene>
    <name type="ordered locus">BQ2027_MB2255C</name>
</gene>
<organism>
    <name type="scientific">Mycobacterium bovis (strain ATCC BAA-935 / AF2122/97)</name>
    <dbReference type="NCBI Taxonomy" id="233413"/>
    <lineage>
        <taxon>Bacteria</taxon>
        <taxon>Bacillati</taxon>
        <taxon>Actinomycetota</taxon>
        <taxon>Actinomycetes</taxon>
        <taxon>Mycobacteriales</taxon>
        <taxon>Mycobacteriaceae</taxon>
        <taxon>Mycobacterium</taxon>
        <taxon>Mycobacterium tuberculosis complex</taxon>
    </lineage>
</organism>
<sequence>MSVRLADVIDVLDQAYPPRLAQSWDSVGLVCGDPDDVVDSVTVAVDATPAVVDQVPQAGLLLVHHPLLLRGVDTVAANTPKGVLVHRLIRTGRSLFTAHTNADSASPGVSDALAHAVGLTVDAVLDPVPGAADLDKWVIYVPRENSEAVRAAVFEAGAGHIGDYSHCSWSVAGTGQFLAHDGASPAIGSVGTVERVAEDRVEVVAPARARAEVLAAMRAAHPYEEPAFDIFALVPPPVGSGLGRIGRLPKPEPLRTFVARLEAALPPTATGVRAAGDPDLLVSRVAVCGGAGDSLLATVAAADVQAYVTADLRHHPADEHCRASQVALIDVAHWASEFPWCGQAAEVLRSHFGASLPVRVCTICTDPWNLDHETGRDQA</sequence>
<proteinExistence type="inferred from homology"/>
<name>GCH1L_MYCBO</name>
<protein>
    <recommendedName>
        <fullName>GTP cyclohydrolase 1 type 2 homolog</fullName>
    </recommendedName>
</protein>